<name>GMHA_FUSNN</name>
<gene>
    <name evidence="1" type="primary">gmhA</name>
    <name type="ordered locus">FN0502</name>
</gene>
<organism>
    <name type="scientific">Fusobacterium nucleatum subsp. nucleatum (strain ATCC 25586 / DSM 15643 / BCRC 10681 / CIP 101130 / JCM 8532 / KCTC 2640 / LMG 13131 / VPI 4355)</name>
    <dbReference type="NCBI Taxonomy" id="190304"/>
    <lineage>
        <taxon>Bacteria</taxon>
        <taxon>Fusobacteriati</taxon>
        <taxon>Fusobacteriota</taxon>
        <taxon>Fusobacteriia</taxon>
        <taxon>Fusobacteriales</taxon>
        <taxon>Fusobacteriaceae</taxon>
        <taxon>Fusobacterium</taxon>
    </lineage>
</organism>
<comment type="function">
    <text evidence="1">Catalyzes the isomerization of sedoheptulose 7-phosphate in D-glycero-D-manno-heptose 7-phosphate.</text>
</comment>
<comment type="catalytic activity">
    <reaction evidence="1">
        <text>2 D-sedoheptulose 7-phosphate = D-glycero-alpha-D-manno-heptose 7-phosphate + D-glycero-beta-D-manno-heptose 7-phosphate</text>
        <dbReference type="Rhea" id="RHEA:27489"/>
        <dbReference type="ChEBI" id="CHEBI:57483"/>
        <dbReference type="ChEBI" id="CHEBI:60203"/>
        <dbReference type="ChEBI" id="CHEBI:60204"/>
        <dbReference type="EC" id="5.3.1.28"/>
    </reaction>
</comment>
<comment type="cofactor">
    <cofactor evidence="1">
        <name>Zn(2+)</name>
        <dbReference type="ChEBI" id="CHEBI:29105"/>
    </cofactor>
    <text evidence="1">Binds 1 zinc ion per subunit.</text>
</comment>
<comment type="pathway">
    <text evidence="1">Carbohydrate biosynthesis; D-glycero-D-manno-heptose 7-phosphate biosynthesis; D-glycero-alpha-D-manno-heptose 7-phosphate and D-glycero-beta-D-manno-heptose 7-phosphate from sedoheptulose 7-phosphate: step 1/1.</text>
</comment>
<comment type="subcellular location">
    <subcellularLocation>
        <location evidence="1">Cytoplasm</location>
    </subcellularLocation>
</comment>
<comment type="miscellaneous">
    <text evidence="1">The reaction produces a racemic mixture of D-glycero-alpha-D-manno-heptose 7-phosphate and D-glycero-beta-D-manno-heptose 7-phosphate.</text>
</comment>
<comment type="similarity">
    <text evidence="1">Belongs to the SIS family. GmhA subfamily.</text>
</comment>
<evidence type="ECO:0000255" key="1">
    <source>
        <dbReference type="HAMAP-Rule" id="MF_00067"/>
    </source>
</evidence>
<dbReference type="EC" id="5.3.1.28" evidence="1"/>
<dbReference type="EMBL" id="AE009951">
    <property type="protein sequence ID" value="AAL94698.1"/>
    <property type="molecule type" value="Genomic_DNA"/>
</dbReference>
<dbReference type="RefSeq" id="NP_603399.1">
    <property type="nucleotide sequence ID" value="NC_003454.1"/>
</dbReference>
<dbReference type="RefSeq" id="WP_011016435.1">
    <property type="nucleotide sequence ID" value="NZ_OZ209243.1"/>
</dbReference>
<dbReference type="SMR" id="Q8R6A2"/>
<dbReference type="STRING" id="190304.FN0502"/>
<dbReference type="PaxDb" id="190304-FN0502"/>
<dbReference type="EnsemblBacteria" id="AAL94698">
    <property type="protein sequence ID" value="AAL94698"/>
    <property type="gene ID" value="FN0502"/>
</dbReference>
<dbReference type="GeneID" id="79783508"/>
<dbReference type="KEGG" id="fnu:FN0502"/>
<dbReference type="PATRIC" id="fig|190304.8.peg.1072"/>
<dbReference type="eggNOG" id="COG0279">
    <property type="taxonomic scope" value="Bacteria"/>
</dbReference>
<dbReference type="HOGENOM" id="CLU_080999_4_0_0"/>
<dbReference type="InParanoid" id="Q8R6A2"/>
<dbReference type="BioCyc" id="FNUC190304:G1FZS-1094-MONOMER"/>
<dbReference type="UniPathway" id="UPA00041">
    <property type="reaction ID" value="UER00436"/>
</dbReference>
<dbReference type="Proteomes" id="UP000002521">
    <property type="component" value="Chromosome"/>
</dbReference>
<dbReference type="GO" id="GO:0005829">
    <property type="term" value="C:cytosol"/>
    <property type="evidence" value="ECO:0000318"/>
    <property type="project" value="GO_Central"/>
</dbReference>
<dbReference type="GO" id="GO:0097367">
    <property type="term" value="F:carbohydrate derivative binding"/>
    <property type="evidence" value="ECO:0007669"/>
    <property type="project" value="InterPro"/>
</dbReference>
<dbReference type="GO" id="GO:0008968">
    <property type="term" value="F:D-sedoheptulose 7-phosphate isomerase activity"/>
    <property type="evidence" value="ECO:0000318"/>
    <property type="project" value="GO_Central"/>
</dbReference>
<dbReference type="GO" id="GO:0008270">
    <property type="term" value="F:zinc ion binding"/>
    <property type="evidence" value="ECO:0007669"/>
    <property type="project" value="UniProtKB-UniRule"/>
</dbReference>
<dbReference type="GO" id="GO:0005975">
    <property type="term" value="P:carbohydrate metabolic process"/>
    <property type="evidence" value="ECO:0007669"/>
    <property type="project" value="UniProtKB-UniRule"/>
</dbReference>
<dbReference type="GO" id="GO:2001061">
    <property type="term" value="P:D-glycero-D-manno-heptose 7-phosphate biosynthetic process"/>
    <property type="evidence" value="ECO:0000318"/>
    <property type="project" value="GO_Central"/>
</dbReference>
<dbReference type="CDD" id="cd05006">
    <property type="entry name" value="SIS_GmhA"/>
    <property type="match status" value="1"/>
</dbReference>
<dbReference type="Gene3D" id="3.40.50.10490">
    <property type="entry name" value="Glucose-6-phosphate isomerase like protein, domain 1"/>
    <property type="match status" value="1"/>
</dbReference>
<dbReference type="HAMAP" id="MF_00067">
    <property type="entry name" value="GmhA"/>
    <property type="match status" value="1"/>
</dbReference>
<dbReference type="InterPro" id="IPR035461">
    <property type="entry name" value="GmhA/DiaA"/>
</dbReference>
<dbReference type="InterPro" id="IPR004515">
    <property type="entry name" value="Phosphoheptose_Isoase"/>
</dbReference>
<dbReference type="InterPro" id="IPR001347">
    <property type="entry name" value="SIS_dom"/>
</dbReference>
<dbReference type="InterPro" id="IPR046348">
    <property type="entry name" value="SIS_dom_sf"/>
</dbReference>
<dbReference type="InterPro" id="IPR050099">
    <property type="entry name" value="SIS_GmhA/DiaA_subfam"/>
</dbReference>
<dbReference type="NCBIfam" id="TIGR00441">
    <property type="entry name" value="gmhA"/>
    <property type="match status" value="1"/>
</dbReference>
<dbReference type="PANTHER" id="PTHR30390:SF7">
    <property type="entry name" value="PHOSPHOHEPTOSE ISOMERASE"/>
    <property type="match status" value="1"/>
</dbReference>
<dbReference type="PANTHER" id="PTHR30390">
    <property type="entry name" value="SEDOHEPTULOSE 7-PHOSPHATE ISOMERASE / DNAA INITIATOR-ASSOCIATING FACTOR FOR REPLICATION INITIATION"/>
    <property type="match status" value="1"/>
</dbReference>
<dbReference type="Pfam" id="PF13580">
    <property type="entry name" value="SIS_2"/>
    <property type="match status" value="1"/>
</dbReference>
<dbReference type="SUPFAM" id="SSF53697">
    <property type="entry name" value="SIS domain"/>
    <property type="match status" value="1"/>
</dbReference>
<dbReference type="PROSITE" id="PS51464">
    <property type="entry name" value="SIS"/>
    <property type="match status" value="1"/>
</dbReference>
<proteinExistence type="inferred from homology"/>
<sequence length="194" mass="21770">MNLISSYKTEFELLRKFIEEEEERKETEKVAQKLANIFTKGKKVLICGNGGSNCDAMHFIEEFTGRFRKERRALPAISISDPSHITCVANDYGFEYIFSKGVEAYGQEGDMFIGISTSGNSPNVIKAVEQAKAQGLVTVGLLGKDGGKLKGMCDYEFIIPGKTSDRVQEIHMMILHIIIEGVERIMFPENYVEE</sequence>
<keyword id="KW-0119">Carbohydrate metabolism</keyword>
<keyword id="KW-0963">Cytoplasm</keyword>
<keyword id="KW-0413">Isomerase</keyword>
<keyword id="KW-0479">Metal-binding</keyword>
<keyword id="KW-1185">Reference proteome</keyword>
<keyword id="KW-0862">Zinc</keyword>
<feature type="chain" id="PRO_0000136529" description="Phosphoheptose isomerase">
    <location>
        <begin position="1"/>
        <end position="194"/>
    </location>
</feature>
<feature type="domain" description="SIS" evidence="1">
    <location>
        <begin position="34"/>
        <end position="188"/>
    </location>
</feature>
<feature type="binding site" evidence="1">
    <location>
        <begin position="49"/>
        <end position="51"/>
    </location>
    <ligand>
        <name>substrate</name>
    </ligand>
</feature>
<feature type="binding site" evidence="1">
    <location>
        <position position="58"/>
    </location>
    <ligand>
        <name>Zn(2+)</name>
        <dbReference type="ChEBI" id="CHEBI:29105"/>
    </ligand>
</feature>
<feature type="binding site" evidence="1">
    <location>
        <position position="62"/>
    </location>
    <ligand>
        <name>substrate</name>
    </ligand>
</feature>
<feature type="binding site" evidence="1">
    <location>
        <position position="62"/>
    </location>
    <ligand>
        <name>Zn(2+)</name>
        <dbReference type="ChEBI" id="CHEBI:29105"/>
    </ligand>
</feature>
<feature type="binding site" evidence="1">
    <location>
        <begin position="90"/>
        <end position="91"/>
    </location>
    <ligand>
        <name>substrate</name>
    </ligand>
</feature>
<feature type="binding site" evidence="1">
    <location>
        <begin position="116"/>
        <end position="118"/>
    </location>
    <ligand>
        <name>substrate</name>
    </ligand>
</feature>
<feature type="binding site" evidence="1">
    <location>
        <position position="121"/>
    </location>
    <ligand>
        <name>substrate</name>
    </ligand>
</feature>
<feature type="binding site" evidence="1">
    <location>
        <position position="168"/>
    </location>
    <ligand>
        <name>substrate</name>
    </ligand>
</feature>
<feature type="binding site" evidence="1">
    <location>
        <position position="168"/>
    </location>
    <ligand>
        <name>Zn(2+)</name>
        <dbReference type="ChEBI" id="CHEBI:29105"/>
    </ligand>
</feature>
<feature type="binding site" evidence="1">
    <location>
        <position position="176"/>
    </location>
    <ligand>
        <name>Zn(2+)</name>
        <dbReference type="ChEBI" id="CHEBI:29105"/>
    </ligand>
</feature>
<reference key="1">
    <citation type="journal article" date="2002" name="J. Bacteriol.">
        <title>Genome sequence and analysis of the oral bacterium Fusobacterium nucleatum strain ATCC 25586.</title>
        <authorList>
            <person name="Kapatral V."/>
            <person name="Anderson I."/>
            <person name="Ivanova N."/>
            <person name="Reznik G."/>
            <person name="Los T."/>
            <person name="Lykidis A."/>
            <person name="Bhattacharyya A."/>
            <person name="Bartman A."/>
            <person name="Gardner W."/>
            <person name="Grechkin G."/>
            <person name="Zhu L."/>
            <person name="Vasieva O."/>
            <person name="Chu L."/>
            <person name="Kogan Y."/>
            <person name="Chaga O."/>
            <person name="Goltsman E."/>
            <person name="Bernal A."/>
            <person name="Larsen N."/>
            <person name="D'Souza M."/>
            <person name="Walunas T."/>
            <person name="Pusch G."/>
            <person name="Haselkorn R."/>
            <person name="Fonstein M."/>
            <person name="Kyrpides N.C."/>
            <person name="Overbeek R."/>
        </authorList>
    </citation>
    <scope>NUCLEOTIDE SEQUENCE [LARGE SCALE GENOMIC DNA]</scope>
    <source>
        <strain>ATCC 25586 / DSM 15643 / BCRC 10681 / CIP 101130 / JCM 8532 / KCTC 2640 / LMG 13131 / VPI 4355</strain>
    </source>
</reference>
<accession>Q8R6A2</accession>
<protein>
    <recommendedName>
        <fullName evidence="1">Phosphoheptose isomerase</fullName>
        <ecNumber evidence="1">5.3.1.28</ecNumber>
    </recommendedName>
    <alternativeName>
        <fullName evidence="1">Sedoheptulose 7-phosphate isomerase</fullName>
    </alternativeName>
</protein>